<gene>
    <name evidence="1" type="primary">gpt</name>
    <name type="ordered locus">MS2117</name>
</gene>
<name>XGPT_MANSM</name>
<comment type="function">
    <text evidence="1">Purine salvage pathway enzyme that catalyzes the transfer of the ribosyl-5-phosphate group from 5-phospho-alpha-D-ribose 1-diphosphate (PRPP) to the N9 position of the 6-oxopurines guanine and xanthine to form the corresponding ribonucleotides GMP (guanosine 5'-monophosphate) and XMP (xanthosine 5'-monophosphate), with the release of PPi. To a lesser extent, also acts on hypoxanthine.</text>
</comment>
<comment type="catalytic activity">
    <reaction evidence="1">
        <text>GMP + diphosphate = guanine + 5-phospho-alpha-D-ribose 1-diphosphate</text>
        <dbReference type="Rhea" id="RHEA:25424"/>
        <dbReference type="ChEBI" id="CHEBI:16235"/>
        <dbReference type="ChEBI" id="CHEBI:33019"/>
        <dbReference type="ChEBI" id="CHEBI:58017"/>
        <dbReference type="ChEBI" id="CHEBI:58115"/>
    </reaction>
    <physiologicalReaction direction="right-to-left" evidence="1">
        <dbReference type="Rhea" id="RHEA:25426"/>
    </physiologicalReaction>
</comment>
<comment type="catalytic activity">
    <reaction evidence="1">
        <text>XMP + diphosphate = xanthine + 5-phospho-alpha-D-ribose 1-diphosphate</text>
        <dbReference type="Rhea" id="RHEA:10800"/>
        <dbReference type="ChEBI" id="CHEBI:17712"/>
        <dbReference type="ChEBI" id="CHEBI:33019"/>
        <dbReference type="ChEBI" id="CHEBI:57464"/>
        <dbReference type="ChEBI" id="CHEBI:58017"/>
        <dbReference type="EC" id="2.4.2.22"/>
    </reaction>
    <physiologicalReaction direction="right-to-left" evidence="1">
        <dbReference type="Rhea" id="RHEA:10802"/>
    </physiologicalReaction>
</comment>
<comment type="catalytic activity">
    <reaction evidence="1">
        <text>IMP + diphosphate = hypoxanthine + 5-phospho-alpha-D-ribose 1-diphosphate</text>
        <dbReference type="Rhea" id="RHEA:17973"/>
        <dbReference type="ChEBI" id="CHEBI:17368"/>
        <dbReference type="ChEBI" id="CHEBI:33019"/>
        <dbReference type="ChEBI" id="CHEBI:58017"/>
        <dbReference type="ChEBI" id="CHEBI:58053"/>
    </reaction>
    <physiologicalReaction direction="right-to-left" evidence="1">
        <dbReference type="Rhea" id="RHEA:17975"/>
    </physiologicalReaction>
</comment>
<comment type="cofactor">
    <cofactor evidence="1">
        <name>Mg(2+)</name>
        <dbReference type="ChEBI" id="CHEBI:18420"/>
    </cofactor>
</comment>
<comment type="pathway">
    <text evidence="1">Purine metabolism; GMP biosynthesis via salvage pathway; GMP from guanine: step 1/1.</text>
</comment>
<comment type="pathway">
    <text evidence="1">Purine metabolism; XMP biosynthesis via salvage pathway; XMP from xanthine: step 1/1.</text>
</comment>
<comment type="subunit">
    <text evidence="1">Homotetramer.</text>
</comment>
<comment type="subcellular location">
    <subcellularLocation>
        <location evidence="1">Cell inner membrane</location>
        <topology evidence="1">Peripheral membrane protein</topology>
    </subcellularLocation>
</comment>
<comment type="similarity">
    <text evidence="1">Belongs to the purine/pyrimidine phosphoribosyltransferase family. XGPT subfamily.</text>
</comment>
<feature type="chain" id="PRO_0000139675" description="Xanthine-guanine phosphoribosyltransferase">
    <location>
        <begin position="1"/>
        <end position="152"/>
    </location>
</feature>
<feature type="binding site" evidence="1">
    <location>
        <begin position="37"/>
        <end position="38"/>
    </location>
    <ligand>
        <name>5-phospho-alpha-D-ribose 1-diphosphate</name>
        <dbReference type="ChEBI" id="CHEBI:58017"/>
    </ligand>
</feature>
<feature type="binding site" evidence="1">
    <location>
        <begin position="88"/>
        <end position="96"/>
    </location>
    <ligand>
        <name>5-phospho-alpha-D-ribose 1-diphosphate</name>
        <dbReference type="ChEBI" id="CHEBI:58017"/>
    </ligand>
</feature>
<feature type="binding site" evidence="1">
    <location>
        <position position="89"/>
    </location>
    <ligand>
        <name>Mg(2+)</name>
        <dbReference type="ChEBI" id="CHEBI:18420"/>
    </ligand>
</feature>
<feature type="binding site" evidence="1">
    <location>
        <begin position="92"/>
        <end position="96"/>
    </location>
    <ligand>
        <name>GMP</name>
        <dbReference type="ChEBI" id="CHEBI:58115"/>
    </ligand>
</feature>
<feature type="binding site" evidence="1">
    <location>
        <position position="92"/>
    </location>
    <ligand>
        <name>guanine</name>
        <dbReference type="ChEBI" id="CHEBI:16235"/>
    </ligand>
</feature>
<feature type="binding site" evidence="1">
    <location>
        <position position="92"/>
    </location>
    <ligand>
        <name>xanthine</name>
        <dbReference type="ChEBI" id="CHEBI:17712"/>
    </ligand>
</feature>
<feature type="binding site" evidence="1">
    <location>
        <begin position="134"/>
        <end position="135"/>
    </location>
    <ligand>
        <name>GMP</name>
        <dbReference type="ChEBI" id="CHEBI:58115"/>
    </ligand>
</feature>
<feature type="binding site" evidence="1">
    <location>
        <position position="135"/>
    </location>
    <ligand>
        <name>guanine</name>
        <dbReference type="ChEBI" id="CHEBI:16235"/>
    </ligand>
</feature>
<feature type="binding site" evidence="1">
    <location>
        <position position="135"/>
    </location>
    <ligand>
        <name>xanthine</name>
        <dbReference type="ChEBI" id="CHEBI:17712"/>
    </ligand>
</feature>
<keyword id="KW-0997">Cell inner membrane</keyword>
<keyword id="KW-1003">Cell membrane</keyword>
<keyword id="KW-0328">Glycosyltransferase</keyword>
<keyword id="KW-0460">Magnesium</keyword>
<keyword id="KW-0472">Membrane</keyword>
<keyword id="KW-0479">Metal-binding</keyword>
<keyword id="KW-0660">Purine salvage</keyword>
<keyword id="KW-0808">Transferase</keyword>
<evidence type="ECO:0000255" key="1">
    <source>
        <dbReference type="HAMAP-Rule" id="MF_01903"/>
    </source>
</evidence>
<protein>
    <recommendedName>
        <fullName evidence="1">Xanthine-guanine phosphoribosyltransferase</fullName>
        <shortName evidence="1">XGPRT</shortName>
        <ecNumber evidence="1">2.4.2.-</ecNumber>
        <ecNumber evidence="1">2.4.2.22</ecNumber>
    </recommendedName>
    <alternativeName>
        <fullName evidence="1">Xanthine phosphoribosyltransferase</fullName>
    </alternativeName>
</protein>
<dbReference type="EC" id="2.4.2.-" evidence="1"/>
<dbReference type="EC" id="2.4.2.22" evidence="1"/>
<dbReference type="EMBL" id="AE016827">
    <property type="protein sequence ID" value="AAU38724.1"/>
    <property type="molecule type" value="Genomic_DNA"/>
</dbReference>
<dbReference type="RefSeq" id="WP_011201271.1">
    <property type="nucleotide sequence ID" value="NC_006300.1"/>
</dbReference>
<dbReference type="SMR" id="Q65QN6"/>
<dbReference type="STRING" id="221988.MS2117"/>
<dbReference type="KEGG" id="msu:MS2117"/>
<dbReference type="eggNOG" id="COG2236">
    <property type="taxonomic scope" value="Bacteria"/>
</dbReference>
<dbReference type="HOGENOM" id="CLU_080904_3_0_6"/>
<dbReference type="OrthoDB" id="9789690at2"/>
<dbReference type="UniPathway" id="UPA00602">
    <property type="reaction ID" value="UER00658"/>
</dbReference>
<dbReference type="UniPathway" id="UPA00909">
    <property type="reaction ID" value="UER00887"/>
</dbReference>
<dbReference type="Proteomes" id="UP000000607">
    <property type="component" value="Chromosome"/>
</dbReference>
<dbReference type="GO" id="GO:0005829">
    <property type="term" value="C:cytosol"/>
    <property type="evidence" value="ECO:0007669"/>
    <property type="project" value="TreeGrafter"/>
</dbReference>
<dbReference type="GO" id="GO:0005886">
    <property type="term" value="C:plasma membrane"/>
    <property type="evidence" value="ECO:0007669"/>
    <property type="project" value="UniProtKB-SubCell"/>
</dbReference>
<dbReference type="GO" id="GO:0052657">
    <property type="term" value="F:guanine phosphoribosyltransferase activity"/>
    <property type="evidence" value="ECO:0007669"/>
    <property type="project" value="RHEA"/>
</dbReference>
<dbReference type="GO" id="GO:0004422">
    <property type="term" value="F:hypoxanthine phosphoribosyltransferase activity"/>
    <property type="evidence" value="ECO:0007669"/>
    <property type="project" value="RHEA"/>
</dbReference>
<dbReference type="GO" id="GO:0000287">
    <property type="term" value="F:magnesium ion binding"/>
    <property type="evidence" value="ECO:0007669"/>
    <property type="project" value="UniProtKB-UniRule"/>
</dbReference>
<dbReference type="GO" id="GO:0000310">
    <property type="term" value="F:xanthine phosphoribosyltransferase activity"/>
    <property type="evidence" value="ECO:0007669"/>
    <property type="project" value="UniProtKB-UniRule"/>
</dbReference>
<dbReference type="GO" id="GO:0032263">
    <property type="term" value="P:GMP salvage"/>
    <property type="evidence" value="ECO:0007669"/>
    <property type="project" value="UniProtKB-UniRule"/>
</dbReference>
<dbReference type="GO" id="GO:0032264">
    <property type="term" value="P:IMP salvage"/>
    <property type="evidence" value="ECO:0007669"/>
    <property type="project" value="TreeGrafter"/>
</dbReference>
<dbReference type="GO" id="GO:0006166">
    <property type="term" value="P:purine ribonucleoside salvage"/>
    <property type="evidence" value="ECO:0007669"/>
    <property type="project" value="UniProtKB-KW"/>
</dbReference>
<dbReference type="GO" id="GO:0032265">
    <property type="term" value="P:XMP salvage"/>
    <property type="evidence" value="ECO:0007669"/>
    <property type="project" value="UniProtKB-UniRule"/>
</dbReference>
<dbReference type="CDD" id="cd06223">
    <property type="entry name" value="PRTases_typeI"/>
    <property type="match status" value="1"/>
</dbReference>
<dbReference type="FunFam" id="3.40.50.2020:FF:000009">
    <property type="entry name" value="Xanthine phosphoribosyltransferase"/>
    <property type="match status" value="1"/>
</dbReference>
<dbReference type="Gene3D" id="3.40.50.2020">
    <property type="match status" value="1"/>
</dbReference>
<dbReference type="HAMAP" id="MF_01903">
    <property type="entry name" value="XGPRT"/>
    <property type="match status" value="1"/>
</dbReference>
<dbReference type="InterPro" id="IPR000836">
    <property type="entry name" value="PRibTrfase_dom"/>
</dbReference>
<dbReference type="InterPro" id="IPR029057">
    <property type="entry name" value="PRTase-like"/>
</dbReference>
<dbReference type="InterPro" id="IPR023747">
    <property type="entry name" value="Xanthine_Guanine_PRibTrfase"/>
</dbReference>
<dbReference type="NCBIfam" id="NF006613">
    <property type="entry name" value="PRK09177.1"/>
    <property type="match status" value="1"/>
</dbReference>
<dbReference type="PANTHER" id="PTHR39563">
    <property type="entry name" value="XANTHINE PHOSPHORIBOSYLTRANSFERASE"/>
    <property type="match status" value="1"/>
</dbReference>
<dbReference type="PANTHER" id="PTHR39563:SF1">
    <property type="entry name" value="XANTHINE-GUANINE PHOSPHORIBOSYLTRANSFERASE"/>
    <property type="match status" value="1"/>
</dbReference>
<dbReference type="Pfam" id="PF00156">
    <property type="entry name" value="Pribosyltran"/>
    <property type="match status" value="1"/>
</dbReference>
<dbReference type="SUPFAM" id="SSF53271">
    <property type="entry name" value="PRTase-like"/>
    <property type="match status" value="1"/>
</dbReference>
<dbReference type="PROSITE" id="PS00103">
    <property type="entry name" value="PUR_PYR_PR_TRANSFER"/>
    <property type="match status" value="1"/>
</dbReference>
<proteinExistence type="inferred from homology"/>
<reference key="1">
    <citation type="journal article" date="2004" name="Nat. Biotechnol.">
        <title>The genome sequence of the capnophilic rumen bacterium Mannheimia succiniciproducens.</title>
        <authorList>
            <person name="Hong S.H."/>
            <person name="Kim J.S."/>
            <person name="Lee S.Y."/>
            <person name="In Y.H."/>
            <person name="Choi S.S."/>
            <person name="Rih J.-K."/>
            <person name="Kim C.H."/>
            <person name="Jeong H."/>
            <person name="Hur C.G."/>
            <person name="Kim J.J."/>
        </authorList>
    </citation>
    <scope>NUCLEOTIDE SEQUENCE [LARGE SCALE GENOMIC DNA]</scope>
    <source>
        <strain>KCTC 0769BP / MBEL55E</strain>
    </source>
</reference>
<sequence>MSEKYVVTWDMFHMHARKLAERLLPASQWKGIIAVSRGGLFPAAVLARELGLRHVETVCIASYDHDQQGDLKVIHKAETDGEGFIVVDDLVDTGNTAREIRNMYPKAKFVTVFAKPAGAPLVDDYVIDIPQNTWIEQPWDLGIGFVPPLARK</sequence>
<organism>
    <name type="scientific">Mannheimia succiniciproducens (strain KCTC 0769BP / MBEL55E)</name>
    <dbReference type="NCBI Taxonomy" id="221988"/>
    <lineage>
        <taxon>Bacteria</taxon>
        <taxon>Pseudomonadati</taxon>
        <taxon>Pseudomonadota</taxon>
        <taxon>Gammaproteobacteria</taxon>
        <taxon>Pasteurellales</taxon>
        <taxon>Pasteurellaceae</taxon>
        <taxon>Basfia</taxon>
    </lineage>
</organism>
<accession>Q65QN6</accession>